<dbReference type="EC" id="2.3.1.-"/>
<dbReference type="EMBL" id="AE000516">
    <property type="protein sequence ID" value="AAK45653.1"/>
    <property type="molecule type" value="Genomic_DNA"/>
</dbReference>
<dbReference type="PIR" id="B70740">
    <property type="entry name" value="B70740"/>
</dbReference>
<dbReference type="RefSeq" id="WP_003406956.1">
    <property type="nucleotide sequence ID" value="NZ_KK341227.1"/>
</dbReference>
<dbReference type="SMR" id="P9WK14"/>
<dbReference type="GeneID" id="45425325"/>
<dbReference type="KEGG" id="mtc:MT1389"/>
<dbReference type="PATRIC" id="fig|83331.31.peg.1497"/>
<dbReference type="HOGENOM" id="CLU_039848_4_0_11"/>
<dbReference type="UniPathway" id="UPA00011"/>
<dbReference type="Proteomes" id="UP000001020">
    <property type="component" value="Chromosome"/>
</dbReference>
<dbReference type="GO" id="GO:0016410">
    <property type="term" value="F:N-acyltransferase activity"/>
    <property type="evidence" value="ECO:0007669"/>
    <property type="project" value="TreeGrafter"/>
</dbReference>
<dbReference type="GO" id="GO:0019290">
    <property type="term" value="P:siderophore biosynthetic process"/>
    <property type="evidence" value="ECO:0007669"/>
    <property type="project" value="InterPro"/>
</dbReference>
<dbReference type="FunFam" id="3.40.630.30:FF:000148">
    <property type="entry name" value="Lysine N-acyltransferase MbtK"/>
    <property type="match status" value="1"/>
</dbReference>
<dbReference type="Gene3D" id="3.40.630.30">
    <property type="match status" value="1"/>
</dbReference>
<dbReference type="InterPro" id="IPR016181">
    <property type="entry name" value="Acyl_CoA_acyltransferase"/>
</dbReference>
<dbReference type="InterPro" id="IPR019432">
    <property type="entry name" value="Acyltransferase_MbtK/IucB-like"/>
</dbReference>
<dbReference type="PANTHER" id="PTHR31438">
    <property type="entry name" value="LYSINE N-ACYLTRANSFERASE C17G9.06C-RELATED"/>
    <property type="match status" value="1"/>
</dbReference>
<dbReference type="PANTHER" id="PTHR31438:SF1">
    <property type="entry name" value="LYSINE N-ACYLTRANSFERASE C17G9.06C-RELATED"/>
    <property type="match status" value="1"/>
</dbReference>
<dbReference type="Pfam" id="PF13523">
    <property type="entry name" value="Acetyltransf_8"/>
    <property type="match status" value="1"/>
</dbReference>
<dbReference type="SMART" id="SM01006">
    <property type="entry name" value="AlcB"/>
    <property type="match status" value="1"/>
</dbReference>
<dbReference type="SUPFAM" id="SSF55729">
    <property type="entry name" value="Acyl-CoA N-acyltransferases (Nat)"/>
    <property type="match status" value="1"/>
</dbReference>
<reference key="1">
    <citation type="journal article" date="2002" name="J. Bacteriol.">
        <title>Whole-genome comparison of Mycobacterium tuberculosis clinical and laboratory strains.</title>
        <authorList>
            <person name="Fleischmann R.D."/>
            <person name="Alland D."/>
            <person name="Eisen J.A."/>
            <person name="Carpenter L."/>
            <person name="White O."/>
            <person name="Peterson J.D."/>
            <person name="DeBoy R.T."/>
            <person name="Dodson R.J."/>
            <person name="Gwinn M.L."/>
            <person name="Haft D.H."/>
            <person name="Hickey E.K."/>
            <person name="Kolonay J.F."/>
            <person name="Nelson W.C."/>
            <person name="Umayam L.A."/>
            <person name="Ermolaeva M.D."/>
            <person name="Salzberg S.L."/>
            <person name="Delcher A."/>
            <person name="Utterback T.R."/>
            <person name="Weidman J.F."/>
            <person name="Khouri H.M."/>
            <person name="Gill J."/>
            <person name="Mikula A."/>
            <person name="Bishai W."/>
            <person name="Jacobs W.R. Jr."/>
            <person name="Venter J.C."/>
            <person name="Fraser C.M."/>
        </authorList>
    </citation>
    <scope>NUCLEOTIDE SEQUENCE [LARGE SCALE GENOMIC DNA]</scope>
    <source>
        <strain>CDC 1551 / Oshkosh</strain>
    </source>
</reference>
<protein>
    <recommendedName>
        <fullName>Lysine N-acyltransferase MbtK</fullName>
        <shortName>N-acyltransferase MbtK</shortName>
        <ecNumber>2.3.1.-</ecNumber>
    </recommendedName>
    <alternativeName>
        <fullName>Mycobactin synthase protein K</fullName>
    </alternativeName>
</protein>
<accession>P9WK14</accession>
<accession>L0T804</accession>
<accession>P64819</accession>
<accession>Q11017</accession>
<proteinExistence type="inferred from homology"/>
<evidence type="ECO:0000250" key="1"/>
<evidence type="ECO:0000255" key="2"/>
<evidence type="ECO:0000305" key="3"/>
<sequence length="210" mass="23799">MTKPTSAGQADDALVRLARERFDLPDQVRRLARPPVPSLEPPYGLRVAQLTDAEMLAEWMNRPHLAAAWEYDWPASRWRQHLNAQLEGTYSLPLIGSWHGTDGGYLELYWAAKDLISHYYDADPYDLGLHAAIADLSKVNRGFGPLLLPRIVASVFANEPRCRRIMFDPDHRNTATRRLCEWAGCKFLGEHDTTNRRMALYALEAPTTAA</sequence>
<comment type="function">
    <text evidence="1">Acyltransferase required for the direct transfer of medium- to long-chain fatty acyl moieties from a carrier protein (MbtL) on to the epsilon-amino group of lysine residue in the mycobactin core.</text>
</comment>
<comment type="pathway">
    <text>Siderophore biosynthesis; mycobactin biosynthesis.</text>
</comment>
<comment type="subunit">
    <text evidence="1">Monomer.</text>
</comment>
<comment type="similarity">
    <text evidence="3">Belongs to the lysine N-acyltransferase MbtK family.</text>
</comment>
<organism>
    <name type="scientific">Mycobacterium tuberculosis (strain CDC 1551 / Oshkosh)</name>
    <dbReference type="NCBI Taxonomy" id="83331"/>
    <lineage>
        <taxon>Bacteria</taxon>
        <taxon>Bacillati</taxon>
        <taxon>Actinomycetota</taxon>
        <taxon>Actinomycetes</taxon>
        <taxon>Mycobacteriales</taxon>
        <taxon>Mycobacteriaceae</taxon>
        <taxon>Mycobacterium</taxon>
        <taxon>Mycobacterium tuberculosis complex</taxon>
    </lineage>
</organism>
<gene>
    <name type="primary">mbtK</name>
    <name type="ordered locus">MT1389</name>
</gene>
<name>MBTK_MYCTO</name>
<feature type="chain" id="PRO_0000427733" description="Lysine N-acyltransferase MbtK">
    <location>
        <begin position="1"/>
        <end position="210"/>
    </location>
</feature>
<feature type="active site" description="Proton acceptor" evidence="2">
    <location>
        <position position="168"/>
    </location>
</feature>
<feature type="binding site" evidence="2">
    <location>
        <position position="130"/>
    </location>
    <ligand>
        <name>substrate</name>
    </ligand>
</feature>
<keyword id="KW-0012">Acyltransferase</keyword>
<keyword id="KW-1185">Reference proteome</keyword>
<keyword id="KW-0808">Transferase</keyword>